<proteinExistence type="inferred from homology"/>
<keyword id="KW-0413">Isomerase</keyword>
<keyword id="KW-1185">Reference proteome</keyword>
<keyword id="KW-0819">tRNA processing</keyword>
<accession>A1WLI1</accession>
<reference key="1">
    <citation type="submission" date="2006-12" db="EMBL/GenBank/DDBJ databases">
        <title>Complete sequence of chromosome 1 of Verminephrobacter eiseniae EF01-2.</title>
        <authorList>
            <person name="Copeland A."/>
            <person name="Lucas S."/>
            <person name="Lapidus A."/>
            <person name="Barry K."/>
            <person name="Detter J.C."/>
            <person name="Glavina del Rio T."/>
            <person name="Dalin E."/>
            <person name="Tice H."/>
            <person name="Pitluck S."/>
            <person name="Chertkov O."/>
            <person name="Brettin T."/>
            <person name="Bruce D."/>
            <person name="Han C."/>
            <person name="Tapia R."/>
            <person name="Gilna P."/>
            <person name="Schmutz J."/>
            <person name="Larimer F."/>
            <person name="Land M."/>
            <person name="Hauser L."/>
            <person name="Kyrpides N."/>
            <person name="Kim E."/>
            <person name="Stahl D."/>
            <person name="Richardson P."/>
        </authorList>
    </citation>
    <scope>NUCLEOTIDE SEQUENCE [LARGE SCALE GENOMIC DNA]</scope>
    <source>
        <strain>EF01-2</strain>
    </source>
</reference>
<name>TRUB_VEREI</name>
<comment type="function">
    <text evidence="1">Responsible for synthesis of pseudouridine from uracil-55 in the psi GC loop of transfer RNAs.</text>
</comment>
<comment type="catalytic activity">
    <reaction evidence="1">
        <text>uridine(55) in tRNA = pseudouridine(55) in tRNA</text>
        <dbReference type="Rhea" id="RHEA:42532"/>
        <dbReference type="Rhea" id="RHEA-COMP:10101"/>
        <dbReference type="Rhea" id="RHEA-COMP:10102"/>
        <dbReference type="ChEBI" id="CHEBI:65314"/>
        <dbReference type="ChEBI" id="CHEBI:65315"/>
        <dbReference type="EC" id="5.4.99.25"/>
    </reaction>
</comment>
<comment type="similarity">
    <text evidence="1">Belongs to the pseudouridine synthase TruB family. Type 1 subfamily.</text>
</comment>
<evidence type="ECO:0000255" key="1">
    <source>
        <dbReference type="HAMAP-Rule" id="MF_01080"/>
    </source>
</evidence>
<sequence>MPPASRTRVQRRPVHGVLLLDKPLALSSNQALQKAKWLLRAEKAGHTGTLDPLATGVLPLCFGAATKFSQLQLDAPKTYEAIALPGVTTSTGDAEGAVLQRCAVDPAQLAPERLSAVQRQFTGPISQLPPMHSALKKDGRALYTYARAGIALERAARAVVIHALELSLVQHAPAQTAIKIAVTCSKGCYIRTLAEDIGAALGCGAHLSALRRTDSGGIGIERCISLERLQALPEAERLACLQPPQSLLTRHLRVTLDSDNAARFLSGLPRRGAWPDAPAVAVFGADPPALLGVGHIAGGCLLPDRLLSALEIAQILASQPQRQDCGILEET</sequence>
<organism>
    <name type="scientific">Verminephrobacter eiseniae (strain EF01-2)</name>
    <dbReference type="NCBI Taxonomy" id="391735"/>
    <lineage>
        <taxon>Bacteria</taxon>
        <taxon>Pseudomonadati</taxon>
        <taxon>Pseudomonadota</taxon>
        <taxon>Betaproteobacteria</taxon>
        <taxon>Burkholderiales</taxon>
        <taxon>Comamonadaceae</taxon>
        <taxon>Verminephrobacter</taxon>
    </lineage>
</organism>
<dbReference type="EC" id="5.4.99.25" evidence="1"/>
<dbReference type="EMBL" id="CP000542">
    <property type="protein sequence ID" value="ABM58488.1"/>
    <property type="molecule type" value="Genomic_DNA"/>
</dbReference>
<dbReference type="RefSeq" id="WP_011810486.1">
    <property type="nucleotide sequence ID" value="NC_008786.1"/>
</dbReference>
<dbReference type="SMR" id="A1WLI1"/>
<dbReference type="STRING" id="391735.Veis_2747"/>
<dbReference type="GeneID" id="76461252"/>
<dbReference type="KEGG" id="vei:Veis_2747"/>
<dbReference type="eggNOG" id="COG0130">
    <property type="taxonomic scope" value="Bacteria"/>
</dbReference>
<dbReference type="HOGENOM" id="CLU_032087_0_3_4"/>
<dbReference type="OrthoDB" id="9802309at2"/>
<dbReference type="Proteomes" id="UP000000374">
    <property type="component" value="Chromosome"/>
</dbReference>
<dbReference type="GO" id="GO:0003723">
    <property type="term" value="F:RNA binding"/>
    <property type="evidence" value="ECO:0007669"/>
    <property type="project" value="InterPro"/>
</dbReference>
<dbReference type="GO" id="GO:0160148">
    <property type="term" value="F:tRNA pseudouridine(55) synthase activity"/>
    <property type="evidence" value="ECO:0007669"/>
    <property type="project" value="UniProtKB-EC"/>
</dbReference>
<dbReference type="GO" id="GO:1990481">
    <property type="term" value="P:mRNA pseudouridine synthesis"/>
    <property type="evidence" value="ECO:0007669"/>
    <property type="project" value="TreeGrafter"/>
</dbReference>
<dbReference type="GO" id="GO:0031119">
    <property type="term" value="P:tRNA pseudouridine synthesis"/>
    <property type="evidence" value="ECO:0007669"/>
    <property type="project" value="UniProtKB-UniRule"/>
</dbReference>
<dbReference type="CDD" id="cd02573">
    <property type="entry name" value="PseudoU_synth_EcTruB"/>
    <property type="match status" value="1"/>
</dbReference>
<dbReference type="Gene3D" id="3.30.2350.10">
    <property type="entry name" value="Pseudouridine synthase"/>
    <property type="match status" value="1"/>
</dbReference>
<dbReference type="HAMAP" id="MF_01080">
    <property type="entry name" value="TruB_bact"/>
    <property type="match status" value="1"/>
</dbReference>
<dbReference type="InterPro" id="IPR020103">
    <property type="entry name" value="PsdUridine_synth_cat_dom_sf"/>
</dbReference>
<dbReference type="InterPro" id="IPR002501">
    <property type="entry name" value="PsdUridine_synth_N"/>
</dbReference>
<dbReference type="InterPro" id="IPR014780">
    <property type="entry name" value="tRNA_psdUridine_synth_TruB"/>
</dbReference>
<dbReference type="InterPro" id="IPR032819">
    <property type="entry name" value="TruB_C"/>
</dbReference>
<dbReference type="NCBIfam" id="TIGR00431">
    <property type="entry name" value="TruB"/>
    <property type="match status" value="1"/>
</dbReference>
<dbReference type="PANTHER" id="PTHR13767:SF2">
    <property type="entry name" value="PSEUDOURIDYLATE SYNTHASE TRUB1"/>
    <property type="match status" value="1"/>
</dbReference>
<dbReference type="PANTHER" id="PTHR13767">
    <property type="entry name" value="TRNA-PSEUDOURIDINE SYNTHASE"/>
    <property type="match status" value="1"/>
</dbReference>
<dbReference type="Pfam" id="PF16198">
    <property type="entry name" value="TruB_C_2"/>
    <property type="match status" value="1"/>
</dbReference>
<dbReference type="Pfam" id="PF01509">
    <property type="entry name" value="TruB_N"/>
    <property type="match status" value="1"/>
</dbReference>
<dbReference type="SUPFAM" id="SSF55120">
    <property type="entry name" value="Pseudouridine synthase"/>
    <property type="match status" value="1"/>
</dbReference>
<gene>
    <name evidence="1" type="primary">truB</name>
    <name type="ordered locus">Veis_2747</name>
</gene>
<protein>
    <recommendedName>
        <fullName evidence="1">tRNA pseudouridine synthase B</fullName>
        <ecNumber evidence="1">5.4.99.25</ecNumber>
    </recommendedName>
    <alternativeName>
        <fullName evidence="1">tRNA pseudouridine(55) synthase</fullName>
        <shortName evidence="1">Psi55 synthase</shortName>
    </alternativeName>
    <alternativeName>
        <fullName evidence="1">tRNA pseudouridylate synthase</fullName>
    </alternativeName>
    <alternativeName>
        <fullName evidence="1">tRNA-uridine isomerase</fullName>
    </alternativeName>
</protein>
<feature type="chain" id="PRO_1000084712" description="tRNA pseudouridine synthase B">
    <location>
        <begin position="1"/>
        <end position="331"/>
    </location>
</feature>
<feature type="active site" description="Nucleophile" evidence="1">
    <location>
        <position position="51"/>
    </location>
</feature>